<protein>
    <recommendedName>
        <fullName evidence="1 6">Cyanide hydratase</fullName>
        <shortName evidence="1">CHT</shortName>
        <ecNumber evidence="1 4">4.2.1.66</ecNumber>
    </recommendedName>
    <alternativeName>
        <fullName evidence="1">Cyanide-degrading nitrilase</fullName>
    </alternativeName>
    <alternativeName>
        <fullName evidence="1">Formamide hydrolyase</fullName>
    </alternativeName>
    <alternativeName>
        <fullName evidence="6">NitAn1</fullName>
    </alternativeName>
</protein>
<sequence length="356" mass="40022">MAPVLKKYKAAAVNAEPGWFNLEESVRRTIHWIDEAGKAGCKFIAFPELWIPGYPYWMWKVNYQESLPLLKKYRENSLPSDSDEMRRIRNAARANKIYVSLGYSEVDLASLYTTQVMISPSGDILNHRRKIRATHVERLVFGDGTGDTTESVIQTDIGRVGHLNCWENMNPFMKAYAASLGEQVHVAAWPLYPGKETLKYPDPFTNVAEANADLVTPAYAIETGTYTLAPWQTITAEGIKLNTPPGKDLEDPHIYNGHGRIFGPDGQNLVPHPDKDFEGLLFVDIDLDECHLSKSLADFGGHYMRPDLIRLLVDTNRKDLVVREDRVNGGVEYTRTVDRVGLSTPLDIANTVDSEN</sequence>
<proteinExistence type="evidence at protein level"/>
<evidence type="ECO:0000255" key="1">
    <source>
        <dbReference type="HAMAP-Rule" id="MF_03224"/>
    </source>
</evidence>
<evidence type="ECO:0000255" key="2">
    <source>
        <dbReference type="PROSITE-ProRule" id="PRU00054"/>
    </source>
</evidence>
<evidence type="ECO:0000269" key="3">
    <source>
    </source>
</evidence>
<evidence type="ECO:0000269" key="4">
    <source>
    </source>
</evidence>
<evidence type="ECO:0000269" key="5">
    <source ref="9"/>
</evidence>
<evidence type="ECO:0000303" key="6">
    <source>
    </source>
</evidence>
<evidence type="ECO:0000305" key="7"/>
<evidence type="ECO:0000305" key="8">
    <source>
    </source>
</evidence>
<evidence type="ECO:0000305" key="9">
    <source>
    </source>
</evidence>
<evidence type="ECO:0000305" key="10">
    <source ref="7"/>
</evidence>
<keyword id="KW-0378">Hydrolase</keyword>
<keyword id="KW-0456">Lyase</keyword>
<reference key="1">
    <citation type="submission" date="2007-11" db="EMBL/GenBank/DDBJ databases">
        <authorList>
            <person name="Kaplan O."/>
            <person name="Martinkova L."/>
            <person name="Plihal O."/>
            <person name="Bezouska K."/>
            <person name="Kavan D."/>
        </authorList>
    </citation>
    <scope>NUCLEOTIDE SEQUENCE [MRNA]</scope>
    <source>
        <strain>K10 / CCF 3411</strain>
    </source>
</reference>
<reference key="2">
    <citation type="journal article" date="2006" name="Appl. Microbiol. Biotechnol.">
        <title>Purification and characterization of a nitrilase from Aspergillus niger K10.</title>
        <authorList>
            <person name="Kaplan O."/>
            <person name="Vejvoda V."/>
            <person name="Plihal O."/>
            <person name="Pompach P."/>
            <person name="Kavan D."/>
            <person name="Bojarova P."/>
            <person name="Bezouska K."/>
            <person name="Mackova M."/>
            <person name="Cantarella M."/>
            <person name="Jirku V."/>
            <person name="Kren V."/>
            <person name="Martinkova L."/>
        </authorList>
    </citation>
    <scope>FUNCTION</scope>
    <scope>CATALYTIC ACTIVITY</scope>
    <source>
        <strain>K10 / CCF 3411</strain>
    </source>
</reference>
<reference key="3">
    <citation type="journal article" date="2013" name="Appl. Microbiol. Biotechnol.">
        <authorList>
            <person name="Kaplan O."/>
            <person name="Vejvoda V."/>
            <person name="Plihal O."/>
            <person name="Pompach P."/>
            <person name="Kavan D."/>
            <person name="Bojarova P."/>
            <person name="Bezouska K."/>
            <person name="Mackova M."/>
            <person name="Cantarella M."/>
            <person name="Jirku V."/>
            <person name="Kren V."/>
            <person name="Martinkova L."/>
        </authorList>
    </citation>
    <scope>ERRATUM OF PUBMED:17061133</scope>
    <scope>IDENTIFICATION BY MASS SPECTROMETRY</scope>
</reference>
<reference key="4">
    <citation type="journal article" date="2011" name="BMC Biotechnol.">
        <title>Heterologous expression, purification and characterization of nitrilase from Aspergillus niger K10.</title>
        <authorList>
            <person name="Kaplan O."/>
            <person name="Bezouska K."/>
            <person name="Plihal O."/>
            <person name="Ettrich R."/>
            <person name="Kulik N."/>
            <person name="Vanek O."/>
            <person name="Kavan D."/>
            <person name="Benada O."/>
            <person name="Malandra A."/>
            <person name="Sveda O."/>
            <person name="Vesela A.B."/>
            <person name="Rinagelova A."/>
            <person name="Slamova K."/>
            <person name="Cantarella M."/>
            <person name="Felsberg J."/>
            <person name="Duskova J."/>
            <person name="Dohnalek J."/>
            <person name="Kotik M."/>
            <person name="Kren V."/>
            <person name="Martinkova L."/>
        </authorList>
    </citation>
    <scope>RETRACTED PAPER</scope>
</reference>
<reference key="5">
    <citation type="journal article" date="2013" name="BMC Biotechnol.">
        <authorList>
            <person name="Kaplan O."/>
            <person name="Bezouska K."/>
            <person name="Plihal O."/>
            <person name="Ettrich R."/>
            <person name="Kulik N."/>
            <person name="Vanek O."/>
            <person name="Kavan D."/>
            <person name="Benada O."/>
            <person name="Malandra A."/>
            <person name="Sveda O."/>
            <person name="Vesela A.B."/>
            <person name="Rinagelova A."/>
            <person name="Slamova K."/>
            <person name="Cantarella M."/>
            <person name="Felsberg J."/>
            <person name="Duskova J."/>
            <person name="Dohnalek J."/>
            <person name="Kotik M."/>
            <person name="Kren V."/>
            <person name="Martinkova L."/>
        </authorList>
    </citation>
    <scope>RETRACTION NOTICE OF PUBMED:21210990</scope>
</reference>
<reference key="6">
    <citation type="journal article" date="2012" name="Appl. Microbiol. Biotechnol.">
        <title>Purification and characterization of heterologously expressed nitrilases from filamentous fungi.</title>
        <authorList>
            <person name="Petrickova A."/>
            <person name="Vesela A.B."/>
            <person name="Kaplan O."/>
            <person name="Kubac D."/>
            <person name="Uhnakova B."/>
            <person name="Malandra A."/>
            <person name="Felsberg J."/>
            <person name="Rinagelova A."/>
            <person name="Weyrauch P."/>
            <person name="Kren V."/>
            <person name="Bezouska K."/>
            <person name="Martinkova L."/>
        </authorList>
    </citation>
    <scope>FUNCTION</scope>
</reference>
<reference key="7">
    <citation type="journal article" date="2013" name="Appl. Microbiol. Biotechnol.">
        <authorList>
            <person name="Petrickova A."/>
            <person name="Vesela A.B."/>
            <person name="Kaplan O."/>
            <person name="Kubac D."/>
            <person name="Uhnakova B."/>
            <person name="Malandra A."/>
            <person name="Felsberg J."/>
            <person name="Rinagelova A."/>
            <person name="Weyrauch P."/>
            <person name="Kren V."/>
            <person name="Bezouska K."/>
            <person name="Martinkova L."/>
        </authorList>
    </citation>
    <scope>ERRATUM OF PUBMED:21892598</scope>
</reference>
<reference key="8">
    <citation type="journal article" date="2013" name="Mol. Biotechnol.">
        <title>A comparative study of nitrilases identified by genome mining.</title>
        <authorList>
            <person name="Kaplan O."/>
            <person name="Vesela A.B."/>
            <person name="Petrickova A."/>
            <person name="Pasquarelli F."/>
            <person name="Picmanova M."/>
            <person name="Rinagelova A."/>
            <person name="Bhalla T.C."/>
            <person name="Patek M."/>
            <person name="Martinkova L."/>
        </authorList>
    </citation>
    <scope>FUNCTION</scope>
    <scope>CATALYTIC ACTIVITY</scope>
    <source>
        <strain>K10 / CCF 3411</strain>
    </source>
</reference>
<reference key="9">
    <citation type="journal article" date="2014" name="Process Biochem.">
        <title>Cyanide hydratase from Aspergillus niger K10: Overproduction in Escherichia coli, purification, characterization and use in continuous cyanide degradation.</title>
        <authorList>
            <person name="Rinagelova A."/>
            <person name="Kaplan O."/>
            <person name="Vesela A.B."/>
            <person name="Chmatal M."/>
            <person name="Krenkova A."/>
            <person name="Plihal O."/>
            <person name="Pasquarelli F."/>
            <person name="Cantarella M."/>
            <person name="Martinkova L."/>
        </authorList>
    </citation>
    <scope>FUNCTION</scope>
    <scope>CATALYTIC ACTIVITY</scope>
    <scope>BIOPHYSICOCHEMICAL PROPERTIES</scope>
    <source>
        <strain>K10 / CCF 3411</strain>
    </source>
</reference>
<accession>A9QXE0</accession>
<dbReference type="EC" id="4.2.1.66" evidence="1 4"/>
<dbReference type="EMBL" id="EU282000">
    <property type="protein sequence ID" value="ABX75546.1"/>
    <property type="molecule type" value="mRNA"/>
</dbReference>
<dbReference type="SMR" id="A9QXE0"/>
<dbReference type="PaxDb" id="5061-CADANGAP00001395"/>
<dbReference type="VEuPathDB" id="FungiDB:An01g14550"/>
<dbReference type="VEuPathDB" id="FungiDB:ASPNIDRAFT2_1118133"/>
<dbReference type="VEuPathDB" id="FungiDB:ATCC64974_11800"/>
<dbReference type="VEuPathDB" id="FungiDB:M747DRAFT_70451"/>
<dbReference type="eggNOG" id="KOG0805">
    <property type="taxonomic scope" value="Eukaryota"/>
</dbReference>
<dbReference type="BRENDA" id="3.5.5.1">
    <property type="organism ID" value="518"/>
</dbReference>
<dbReference type="BRENDA" id="3.5.5.5">
    <property type="organism ID" value="518"/>
</dbReference>
<dbReference type="BRENDA" id="4.2.1.66">
    <property type="organism ID" value="518"/>
</dbReference>
<dbReference type="GO" id="GO:0030196">
    <property type="term" value="F:cyanide hydratase activity"/>
    <property type="evidence" value="ECO:0007669"/>
    <property type="project" value="UniProtKB-UniRule"/>
</dbReference>
<dbReference type="GO" id="GO:0000257">
    <property type="term" value="F:nitrilase activity"/>
    <property type="evidence" value="ECO:0007669"/>
    <property type="project" value="UniProtKB-ARBA"/>
</dbReference>
<dbReference type="GO" id="GO:0019500">
    <property type="term" value="P:cyanide catabolic process"/>
    <property type="evidence" value="ECO:0007669"/>
    <property type="project" value="UniProtKB-UniRule"/>
</dbReference>
<dbReference type="CDD" id="cd07564">
    <property type="entry name" value="nitrilases_CHs"/>
    <property type="match status" value="1"/>
</dbReference>
<dbReference type="FunFam" id="3.60.110.10:FF:000011">
    <property type="entry name" value="Cyanide hydratase"/>
    <property type="match status" value="1"/>
</dbReference>
<dbReference type="Gene3D" id="3.60.110.10">
    <property type="entry name" value="Carbon-nitrogen hydrolase"/>
    <property type="match status" value="1"/>
</dbReference>
<dbReference type="HAMAP" id="MF_03224">
    <property type="entry name" value="CN_hydrolase"/>
    <property type="match status" value="1"/>
</dbReference>
<dbReference type="InterPro" id="IPR003010">
    <property type="entry name" value="C-N_Hydrolase"/>
</dbReference>
<dbReference type="InterPro" id="IPR036526">
    <property type="entry name" value="C-N_Hydrolase_sf"/>
</dbReference>
<dbReference type="InterPro" id="IPR037544">
    <property type="entry name" value="CN_hydrolase"/>
</dbReference>
<dbReference type="InterPro" id="IPR000132">
    <property type="entry name" value="Nitrilase/CN_hydratase_CS"/>
</dbReference>
<dbReference type="InterPro" id="IPR044149">
    <property type="entry name" value="Nitrilases_CHs"/>
</dbReference>
<dbReference type="PANTHER" id="PTHR46044:SF4">
    <property type="entry name" value="CYANIDE HYDRATASE"/>
    <property type="match status" value="1"/>
</dbReference>
<dbReference type="PANTHER" id="PTHR46044">
    <property type="entry name" value="NITRILASE"/>
    <property type="match status" value="1"/>
</dbReference>
<dbReference type="Pfam" id="PF00795">
    <property type="entry name" value="CN_hydrolase"/>
    <property type="match status" value="1"/>
</dbReference>
<dbReference type="SUPFAM" id="SSF56317">
    <property type="entry name" value="Carbon-nitrogen hydrolase"/>
    <property type="match status" value="1"/>
</dbReference>
<dbReference type="PROSITE" id="PS50263">
    <property type="entry name" value="CN_HYDROLASE"/>
    <property type="match status" value="1"/>
</dbReference>
<dbReference type="PROSITE" id="PS00920">
    <property type="entry name" value="NITRIL_CHT_1"/>
    <property type="match status" value="1"/>
</dbReference>
<feature type="chain" id="PRO_0000432182" description="Cyanide hydratase">
    <location>
        <begin position="1"/>
        <end position="356"/>
    </location>
</feature>
<feature type="domain" description="CN hydrolase" evidence="2">
    <location>
        <begin position="8"/>
        <end position="287"/>
    </location>
</feature>
<feature type="active site" description="Proton acceptor" evidence="1">
    <location>
        <position position="48"/>
    </location>
</feature>
<feature type="active site" evidence="1">
    <location>
        <position position="130"/>
    </location>
</feature>
<feature type="active site" description="Nucleophile" evidence="1">
    <location>
        <position position="165"/>
    </location>
</feature>
<name>CHT_ASPNG</name>
<comment type="function">
    <text evidence="1 3 4 5">Catalyzes the hydration of cyanide to formamide. Degradation of cyanide may be important for plant pathogenic fungi in infection of cyanogenic plants (PubMed:17061133, PubMed:23475593, Ref.9). Can also transform some nitriles like 2-cyanopyridine and fumaronitrile (Ref.9).</text>
</comment>
<comment type="catalytic activity">
    <reaction evidence="1 3 4 5">
        <text>formamide = hydrogen cyanide + H2O</text>
        <dbReference type="Rhea" id="RHEA:21720"/>
        <dbReference type="ChEBI" id="CHEBI:15377"/>
        <dbReference type="ChEBI" id="CHEBI:16397"/>
        <dbReference type="ChEBI" id="CHEBI:18407"/>
        <dbReference type="EC" id="4.2.1.66"/>
    </reaction>
</comment>
<comment type="biophysicochemical properties">
    <kinetics>
        <KM evidence="5">109 mM for cyanide</KM>
        <KM evidence="5">14.7 mM for fumaronitrile</KM>
        <KM evidence="5">3.7 mM for 2-cyanopyridine</KM>
        <Vmax evidence="5">6.8 mmol/min/mg enzyme with cyanide as substrate</Vmax>
        <Vmax evidence="5">18.8 mmol/min/mg enzyme with fumaronitrile as substrate</Vmax>
        <Vmax evidence="5">10.3 mmol/min/mg enzyme with 2-cyanopyridine as substrate</Vmax>
    </kinetics>
    <phDependence>
        <text evidence="5">Optimum pH is 8-9. Active from pH 5.5 to pH 10.</text>
    </phDependence>
    <temperatureDependence>
        <text evidence="5">Optimum temperature is 45 degrees Celsius.</text>
    </temperatureDependence>
</comment>
<comment type="subunit">
    <text evidence="1">Oligomer of dimers, forming left-handed helical fibers.</text>
</comment>
<comment type="induction">
    <text evidence="1">By cyanide.</text>
</comment>
<comment type="similarity">
    <text evidence="1 7">Belongs to the carbon-nitrogen hydrolase superfamily. Nitrilase family.</text>
</comment>
<comment type="caution">
    <text evidence="8 9 10">It was initially shown that the substrate specificities of the enzyme natively expressed in Aspergillus niger and the recombinant enzyme expressed in E.coli were different (PubMed:17061133), and it was hypothesized that the difference may be due to a misfolding or a post-translational modification (PubMed:21210990). However, both papers were corrected (PubMed:23455586) or retracted (PubMed:23870008), because it was shown that the 2 enzymes analyzed were different in terms of their primary structure (Ref.7).</text>
</comment>
<organism>
    <name type="scientific">Aspergillus niger</name>
    <dbReference type="NCBI Taxonomy" id="5061"/>
    <lineage>
        <taxon>Eukaryota</taxon>
        <taxon>Fungi</taxon>
        <taxon>Dikarya</taxon>
        <taxon>Ascomycota</taxon>
        <taxon>Pezizomycotina</taxon>
        <taxon>Eurotiomycetes</taxon>
        <taxon>Eurotiomycetidae</taxon>
        <taxon>Eurotiales</taxon>
        <taxon>Aspergillaceae</taxon>
        <taxon>Aspergillus</taxon>
        <taxon>Aspergillus subgen. Circumdati</taxon>
    </lineage>
</organism>